<sequence length="338" mass="36564">MLIAQRPTLTEEVVADNRSRFVIEPLEPGFGYTLGNSLRRTLLSSIPGAAVTSIRIDGVLHEFTTVPGVKEDVTEIILNIKNIVVSSENDEPVVMYLRKQGPGVVTAADITPPAGVEVHNPDLHIATVNGKGKLEVELTVERGRGYVSAQQNKAYDTEIGRIPVDSIYSPVLKVTYKVEATRVEQRTDFDKLIVDVESKPAISPRDAVASAGKTLVELFGLARELNTAAEGIEIGPSPTDAALAADLALPIEDLDLTIRSYNCLKREGIHQVGELVARSEADLLDIRNFGAKSITEVKEKLAALGLSLKDSPADFDPSLVTDAYDGDLDADYADEQYN</sequence>
<dbReference type="EC" id="2.7.7.6" evidence="1"/>
<dbReference type="EMBL" id="CP001618">
    <property type="protein sequence ID" value="ACQ81357.1"/>
    <property type="molecule type" value="Genomic_DNA"/>
</dbReference>
<dbReference type="RefSeq" id="WP_015883597.1">
    <property type="nucleotide sequence ID" value="NC_012669.1"/>
</dbReference>
<dbReference type="SMR" id="C5C0G1"/>
<dbReference type="STRING" id="471853.Bcav_3113"/>
<dbReference type="KEGG" id="bcv:Bcav_3113"/>
<dbReference type="eggNOG" id="COG0202">
    <property type="taxonomic scope" value="Bacteria"/>
</dbReference>
<dbReference type="HOGENOM" id="CLU_053084_0_1_11"/>
<dbReference type="OrthoDB" id="9805706at2"/>
<dbReference type="Proteomes" id="UP000007962">
    <property type="component" value="Chromosome"/>
</dbReference>
<dbReference type="GO" id="GO:0005737">
    <property type="term" value="C:cytoplasm"/>
    <property type="evidence" value="ECO:0007669"/>
    <property type="project" value="UniProtKB-ARBA"/>
</dbReference>
<dbReference type="GO" id="GO:0000428">
    <property type="term" value="C:DNA-directed RNA polymerase complex"/>
    <property type="evidence" value="ECO:0007669"/>
    <property type="project" value="UniProtKB-KW"/>
</dbReference>
<dbReference type="GO" id="GO:0003677">
    <property type="term" value="F:DNA binding"/>
    <property type="evidence" value="ECO:0007669"/>
    <property type="project" value="UniProtKB-UniRule"/>
</dbReference>
<dbReference type="GO" id="GO:0003899">
    <property type="term" value="F:DNA-directed RNA polymerase activity"/>
    <property type="evidence" value="ECO:0007669"/>
    <property type="project" value="UniProtKB-UniRule"/>
</dbReference>
<dbReference type="GO" id="GO:0046983">
    <property type="term" value="F:protein dimerization activity"/>
    <property type="evidence" value="ECO:0007669"/>
    <property type="project" value="InterPro"/>
</dbReference>
<dbReference type="GO" id="GO:0006351">
    <property type="term" value="P:DNA-templated transcription"/>
    <property type="evidence" value="ECO:0007669"/>
    <property type="project" value="UniProtKB-UniRule"/>
</dbReference>
<dbReference type="CDD" id="cd06928">
    <property type="entry name" value="RNAP_alpha_NTD"/>
    <property type="match status" value="1"/>
</dbReference>
<dbReference type="FunFam" id="1.10.150.20:FF:000001">
    <property type="entry name" value="DNA-directed RNA polymerase subunit alpha"/>
    <property type="match status" value="1"/>
</dbReference>
<dbReference type="FunFam" id="2.170.120.12:FF:000001">
    <property type="entry name" value="DNA-directed RNA polymerase subunit alpha"/>
    <property type="match status" value="1"/>
</dbReference>
<dbReference type="Gene3D" id="1.10.150.20">
    <property type="entry name" value="5' to 3' exonuclease, C-terminal subdomain"/>
    <property type="match status" value="1"/>
</dbReference>
<dbReference type="Gene3D" id="2.170.120.12">
    <property type="entry name" value="DNA-directed RNA polymerase, insert domain"/>
    <property type="match status" value="1"/>
</dbReference>
<dbReference type="Gene3D" id="3.30.1360.10">
    <property type="entry name" value="RNA polymerase, RBP11-like subunit"/>
    <property type="match status" value="1"/>
</dbReference>
<dbReference type="HAMAP" id="MF_00059">
    <property type="entry name" value="RNApol_bact_RpoA"/>
    <property type="match status" value="1"/>
</dbReference>
<dbReference type="InterPro" id="IPR011262">
    <property type="entry name" value="DNA-dir_RNA_pol_insert"/>
</dbReference>
<dbReference type="InterPro" id="IPR011263">
    <property type="entry name" value="DNA-dir_RNA_pol_RpoA/D/Rpb3"/>
</dbReference>
<dbReference type="InterPro" id="IPR011773">
    <property type="entry name" value="DNA-dir_RpoA"/>
</dbReference>
<dbReference type="InterPro" id="IPR036603">
    <property type="entry name" value="RBP11-like"/>
</dbReference>
<dbReference type="InterPro" id="IPR011260">
    <property type="entry name" value="RNAP_asu_C"/>
</dbReference>
<dbReference type="InterPro" id="IPR036643">
    <property type="entry name" value="RNApol_insert_sf"/>
</dbReference>
<dbReference type="NCBIfam" id="NF003513">
    <property type="entry name" value="PRK05182.1-2"/>
    <property type="match status" value="1"/>
</dbReference>
<dbReference type="NCBIfam" id="NF003514">
    <property type="entry name" value="PRK05182.1-4"/>
    <property type="match status" value="1"/>
</dbReference>
<dbReference type="NCBIfam" id="NF003519">
    <property type="entry name" value="PRK05182.2-5"/>
    <property type="match status" value="1"/>
</dbReference>
<dbReference type="NCBIfam" id="TIGR02027">
    <property type="entry name" value="rpoA"/>
    <property type="match status" value="1"/>
</dbReference>
<dbReference type="Pfam" id="PF01000">
    <property type="entry name" value="RNA_pol_A_bac"/>
    <property type="match status" value="1"/>
</dbReference>
<dbReference type="Pfam" id="PF03118">
    <property type="entry name" value="RNA_pol_A_CTD"/>
    <property type="match status" value="1"/>
</dbReference>
<dbReference type="Pfam" id="PF01193">
    <property type="entry name" value="RNA_pol_L"/>
    <property type="match status" value="1"/>
</dbReference>
<dbReference type="SMART" id="SM00662">
    <property type="entry name" value="RPOLD"/>
    <property type="match status" value="1"/>
</dbReference>
<dbReference type="SUPFAM" id="SSF47789">
    <property type="entry name" value="C-terminal domain of RNA polymerase alpha subunit"/>
    <property type="match status" value="1"/>
</dbReference>
<dbReference type="SUPFAM" id="SSF56553">
    <property type="entry name" value="Insert subdomain of RNA polymerase alpha subunit"/>
    <property type="match status" value="1"/>
</dbReference>
<dbReference type="SUPFAM" id="SSF55257">
    <property type="entry name" value="RBP11-like subunits of RNA polymerase"/>
    <property type="match status" value="1"/>
</dbReference>
<reference key="1">
    <citation type="journal article" date="2009" name="Stand. Genomic Sci.">
        <title>Complete genome sequence of Beutenbergia cavernae type strain (HKI 0122).</title>
        <authorList>
            <person name="Land M."/>
            <person name="Pukall R."/>
            <person name="Abt B."/>
            <person name="Goker M."/>
            <person name="Rohde M."/>
            <person name="Glavina Del Rio T."/>
            <person name="Tice H."/>
            <person name="Copeland A."/>
            <person name="Cheng J.F."/>
            <person name="Lucas S."/>
            <person name="Chen F."/>
            <person name="Nolan M."/>
            <person name="Bruce D."/>
            <person name="Goodwin L."/>
            <person name="Pitluck S."/>
            <person name="Ivanova N."/>
            <person name="Mavromatis K."/>
            <person name="Ovchinnikova G."/>
            <person name="Pati A."/>
            <person name="Chen A."/>
            <person name="Palaniappan K."/>
            <person name="Hauser L."/>
            <person name="Chang Y.J."/>
            <person name="Jefferies C.C."/>
            <person name="Saunders E."/>
            <person name="Brettin T."/>
            <person name="Detter J.C."/>
            <person name="Han C."/>
            <person name="Chain P."/>
            <person name="Bristow J."/>
            <person name="Eisen J.A."/>
            <person name="Markowitz V."/>
            <person name="Hugenholtz P."/>
            <person name="Kyrpides N.C."/>
            <person name="Klenk H.P."/>
            <person name="Lapidus A."/>
        </authorList>
    </citation>
    <scope>NUCLEOTIDE SEQUENCE [LARGE SCALE GENOMIC DNA]</scope>
    <source>
        <strain>ATCC BAA-8 / DSM 12333 / CCUG 43141 / JCM 11478 / NBRC 16432 / NCIMB 13614 / HKI 0122</strain>
    </source>
</reference>
<gene>
    <name evidence="1" type="primary">rpoA</name>
    <name type="ordered locus">Bcav_3113</name>
</gene>
<keyword id="KW-0240">DNA-directed RNA polymerase</keyword>
<keyword id="KW-0548">Nucleotidyltransferase</keyword>
<keyword id="KW-1185">Reference proteome</keyword>
<keyword id="KW-0804">Transcription</keyword>
<keyword id="KW-0808">Transferase</keyword>
<name>RPOA_BEUC1</name>
<feature type="chain" id="PRO_1000202351" description="DNA-directed RNA polymerase subunit alpha">
    <location>
        <begin position="1"/>
        <end position="338"/>
    </location>
</feature>
<feature type="region of interest" description="Alpha N-terminal domain (alpha-NTD)" evidence="1">
    <location>
        <begin position="1"/>
        <end position="226"/>
    </location>
</feature>
<feature type="region of interest" description="Alpha C-terminal domain (alpha-CTD)" evidence="1">
    <location>
        <begin position="243"/>
        <end position="338"/>
    </location>
</feature>
<accession>C5C0G1</accession>
<comment type="function">
    <text evidence="1">DNA-dependent RNA polymerase catalyzes the transcription of DNA into RNA using the four ribonucleoside triphosphates as substrates.</text>
</comment>
<comment type="catalytic activity">
    <reaction evidence="1">
        <text>RNA(n) + a ribonucleoside 5'-triphosphate = RNA(n+1) + diphosphate</text>
        <dbReference type="Rhea" id="RHEA:21248"/>
        <dbReference type="Rhea" id="RHEA-COMP:14527"/>
        <dbReference type="Rhea" id="RHEA-COMP:17342"/>
        <dbReference type="ChEBI" id="CHEBI:33019"/>
        <dbReference type="ChEBI" id="CHEBI:61557"/>
        <dbReference type="ChEBI" id="CHEBI:140395"/>
        <dbReference type="EC" id="2.7.7.6"/>
    </reaction>
</comment>
<comment type="subunit">
    <text evidence="1">Homodimer. The RNAP catalytic core consists of 2 alpha, 1 beta, 1 beta' and 1 omega subunit. When a sigma factor is associated with the core the holoenzyme is formed, which can initiate transcription.</text>
</comment>
<comment type="domain">
    <text evidence="1">The N-terminal domain is essential for RNAP assembly and basal transcription, whereas the C-terminal domain is involved in interaction with transcriptional regulators and with upstream promoter elements.</text>
</comment>
<comment type="similarity">
    <text evidence="1">Belongs to the RNA polymerase alpha chain family.</text>
</comment>
<organism>
    <name type="scientific">Beutenbergia cavernae (strain ATCC BAA-8 / DSM 12333 / CCUG 43141 / JCM 11478 / NBRC 16432 / NCIMB 13614 / HKI 0122)</name>
    <dbReference type="NCBI Taxonomy" id="471853"/>
    <lineage>
        <taxon>Bacteria</taxon>
        <taxon>Bacillati</taxon>
        <taxon>Actinomycetota</taxon>
        <taxon>Actinomycetes</taxon>
        <taxon>Micrococcales</taxon>
        <taxon>Beutenbergiaceae</taxon>
        <taxon>Beutenbergia</taxon>
    </lineage>
</organism>
<protein>
    <recommendedName>
        <fullName evidence="1">DNA-directed RNA polymerase subunit alpha</fullName>
        <shortName evidence="1">RNAP subunit alpha</shortName>
        <ecNumber evidence="1">2.7.7.6</ecNumber>
    </recommendedName>
    <alternativeName>
        <fullName evidence="1">RNA polymerase subunit alpha</fullName>
    </alternativeName>
    <alternativeName>
        <fullName evidence="1">Transcriptase subunit alpha</fullName>
    </alternativeName>
</protein>
<evidence type="ECO:0000255" key="1">
    <source>
        <dbReference type="HAMAP-Rule" id="MF_00059"/>
    </source>
</evidence>
<proteinExistence type="inferred from homology"/>